<evidence type="ECO:0000255" key="1">
    <source>
        <dbReference type="HAMAP-Rule" id="MF_00632"/>
    </source>
</evidence>
<sequence>MPSMDIVSETDLEEVRNAVDNANREITTRFDFRGVEASFEWKKPNIILKAEGDFQLKQMCDLLRSQLAKRNVDAKAMAVGDASASGRNWSQQVTFKEGIEQDMAKQLVKLIKGEKLKVQAAIQGEQVRVTGKKRDELQAVMQLVRTAELEQSFQFTNFKD</sequence>
<proteinExistence type="inferred from homology"/>
<keyword id="KW-0547">Nucleotide-binding</keyword>
<accession>Q487C3</accession>
<gene>
    <name type="ordered locus">CPS_1098</name>
</gene>
<feature type="chain" id="PRO_0000261930" description="Nucleotide-binding protein CPS_1098">
    <location>
        <begin position="1"/>
        <end position="160"/>
    </location>
</feature>
<organism>
    <name type="scientific">Colwellia psychrerythraea (strain 34H / ATCC BAA-681)</name>
    <name type="common">Vibrio psychroerythus</name>
    <dbReference type="NCBI Taxonomy" id="167879"/>
    <lineage>
        <taxon>Bacteria</taxon>
        <taxon>Pseudomonadati</taxon>
        <taxon>Pseudomonadota</taxon>
        <taxon>Gammaproteobacteria</taxon>
        <taxon>Alteromonadales</taxon>
        <taxon>Colwelliaceae</taxon>
        <taxon>Colwellia</taxon>
    </lineage>
</organism>
<dbReference type="EMBL" id="CP000083">
    <property type="protein sequence ID" value="AAZ24527.1"/>
    <property type="molecule type" value="Genomic_DNA"/>
</dbReference>
<dbReference type="RefSeq" id="WP_011041936.1">
    <property type="nucleotide sequence ID" value="NC_003910.7"/>
</dbReference>
<dbReference type="SMR" id="Q487C3"/>
<dbReference type="STRING" id="167879.CPS_1098"/>
<dbReference type="KEGG" id="cps:CPS_1098"/>
<dbReference type="eggNOG" id="COG1666">
    <property type="taxonomic scope" value="Bacteria"/>
</dbReference>
<dbReference type="HOGENOM" id="CLU_099839_1_0_6"/>
<dbReference type="Proteomes" id="UP000000547">
    <property type="component" value="Chromosome"/>
</dbReference>
<dbReference type="GO" id="GO:0005829">
    <property type="term" value="C:cytosol"/>
    <property type="evidence" value="ECO:0007669"/>
    <property type="project" value="TreeGrafter"/>
</dbReference>
<dbReference type="GO" id="GO:0000166">
    <property type="term" value="F:nucleotide binding"/>
    <property type="evidence" value="ECO:0007669"/>
    <property type="project" value="TreeGrafter"/>
</dbReference>
<dbReference type="Gene3D" id="3.30.70.860">
    <property type="match status" value="1"/>
</dbReference>
<dbReference type="Gene3D" id="3.30.70.990">
    <property type="entry name" value="YajQ-like, domain 2"/>
    <property type="match status" value="1"/>
</dbReference>
<dbReference type="HAMAP" id="MF_00632">
    <property type="entry name" value="YajQ"/>
    <property type="match status" value="1"/>
</dbReference>
<dbReference type="InterPro" id="IPR007551">
    <property type="entry name" value="DUF520"/>
</dbReference>
<dbReference type="InterPro" id="IPR035571">
    <property type="entry name" value="UPF0234-like_C"/>
</dbReference>
<dbReference type="InterPro" id="IPR035570">
    <property type="entry name" value="UPF0234_N"/>
</dbReference>
<dbReference type="InterPro" id="IPR036183">
    <property type="entry name" value="YajQ-like_sf"/>
</dbReference>
<dbReference type="NCBIfam" id="NF003819">
    <property type="entry name" value="PRK05412.1"/>
    <property type="match status" value="1"/>
</dbReference>
<dbReference type="PANTHER" id="PTHR30476">
    <property type="entry name" value="UPF0234 PROTEIN YAJQ"/>
    <property type="match status" value="1"/>
</dbReference>
<dbReference type="PANTHER" id="PTHR30476:SF0">
    <property type="entry name" value="UPF0234 PROTEIN YAJQ"/>
    <property type="match status" value="1"/>
</dbReference>
<dbReference type="Pfam" id="PF04461">
    <property type="entry name" value="DUF520"/>
    <property type="match status" value="1"/>
</dbReference>
<dbReference type="SUPFAM" id="SSF89963">
    <property type="entry name" value="YajQ-like"/>
    <property type="match status" value="2"/>
</dbReference>
<reference key="1">
    <citation type="journal article" date="2005" name="Proc. Natl. Acad. Sci. U.S.A.">
        <title>The psychrophilic lifestyle as revealed by the genome sequence of Colwellia psychrerythraea 34H through genomic and proteomic analyses.</title>
        <authorList>
            <person name="Methe B.A."/>
            <person name="Nelson K.E."/>
            <person name="Deming J.W."/>
            <person name="Momen B."/>
            <person name="Melamud E."/>
            <person name="Zhang X."/>
            <person name="Moult J."/>
            <person name="Madupu R."/>
            <person name="Nelson W.C."/>
            <person name="Dodson R.J."/>
            <person name="Brinkac L.M."/>
            <person name="Daugherty S.C."/>
            <person name="Durkin A.S."/>
            <person name="DeBoy R.T."/>
            <person name="Kolonay J.F."/>
            <person name="Sullivan S.A."/>
            <person name="Zhou L."/>
            <person name="Davidsen T.M."/>
            <person name="Wu M."/>
            <person name="Huston A.L."/>
            <person name="Lewis M."/>
            <person name="Weaver B."/>
            <person name="Weidman J.F."/>
            <person name="Khouri H."/>
            <person name="Utterback T.R."/>
            <person name="Feldblyum T.V."/>
            <person name="Fraser C.M."/>
        </authorList>
    </citation>
    <scope>NUCLEOTIDE SEQUENCE [LARGE SCALE GENOMIC DNA]</scope>
    <source>
        <strain>34H / ATCC BAA-681</strain>
    </source>
</reference>
<comment type="function">
    <text evidence="1">Nucleotide-binding protein.</text>
</comment>
<comment type="similarity">
    <text evidence="1">Belongs to the YajQ family.</text>
</comment>
<protein>
    <recommendedName>
        <fullName evidence="1">Nucleotide-binding protein CPS_1098</fullName>
    </recommendedName>
</protein>
<name>Y1098_COLP3</name>